<proteinExistence type="inferred from homology"/>
<evidence type="ECO:0000305" key="1"/>
<comment type="similarity">
    <text evidence="1">Belongs to the NAD(P)-dependent epimerase/dehydratase family. SDR39U1 subfamily.</text>
</comment>
<gene>
    <name type="ordered locus">ML0860</name>
    <name type="ORF">MLCB22.18</name>
</gene>
<dbReference type="EMBL" id="Z98741">
    <property type="protein sequence ID" value="CAB11383.1"/>
    <property type="molecule type" value="Genomic_DNA"/>
</dbReference>
<dbReference type="EMBL" id="AL583920">
    <property type="protein sequence ID" value="CAC31241.1"/>
    <property type="molecule type" value="Genomic_DNA"/>
</dbReference>
<dbReference type="PIR" id="T44893">
    <property type="entry name" value="T44893"/>
</dbReference>
<dbReference type="RefSeq" id="NP_301648.1">
    <property type="nucleotide sequence ID" value="NC_002677.1"/>
</dbReference>
<dbReference type="RefSeq" id="WP_010907972.1">
    <property type="nucleotide sequence ID" value="NC_002677.1"/>
</dbReference>
<dbReference type="SMR" id="O32960"/>
<dbReference type="STRING" id="272631.gene:17574686"/>
<dbReference type="KEGG" id="mle:ML0860"/>
<dbReference type="PATRIC" id="fig|272631.5.peg.1586"/>
<dbReference type="Leproma" id="ML0860"/>
<dbReference type="eggNOG" id="COG1090">
    <property type="taxonomic scope" value="Bacteria"/>
</dbReference>
<dbReference type="HOGENOM" id="CLU_047373_0_2_11"/>
<dbReference type="OrthoDB" id="9801773at2"/>
<dbReference type="Proteomes" id="UP000000806">
    <property type="component" value="Chromosome"/>
</dbReference>
<dbReference type="CDD" id="cd05242">
    <property type="entry name" value="SDR_a8"/>
    <property type="match status" value="1"/>
</dbReference>
<dbReference type="Gene3D" id="3.40.50.720">
    <property type="entry name" value="NAD(P)-binding Rossmann-like Domain"/>
    <property type="match status" value="1"/>
</dbReference>
<dbReference type="InterPro" id="IPR013549">
    <property type="entry name" value="DUF1731"/>
</dbReference>
<dbReference type="InterPro" id="IPR001509">
    <property type="entry name" value="Epimerase_deHydtase"/>
</dbReference>
<dbReference type="InterPro" id="IPR036291">
    <property type="entry name" value="NAD(P)-bd_dom_sf"/>
</dbReference>
<dbReference type="InterPro" id="IPR010099">
    <property type="entry name" value="SDR39U1"/>
</dbReference>
<dbReference type="NCBIfam" id="TIGR01777">
    <property type="entry name" value="yfcH"/>
    <property type="match status" value="1"/>
</dbReference>
<dbReference type="PANTHER" id="PTHR11092:SF0">
    <property type="entry name" value="EPIMERASE FAMILY PROTEIN SDR39U1"/>
    <property type="match status" value="1"/>
</dbReference>
<dbReference type="PANTHER" id="PTHR11092">
    <property type="entry name" value="SUGAR NUCLEOTIDE EPIMERASE RELATED"/>
    <property type="match status" value="1"/>
</dbReference>
<dbReference type="Pfam" id="PF08338">
    <property type="entry name" value="DUF1731"/>
    <property type="match status" value="1"/>
</dbReference>
<dbReference type="Pfam" id="PF01370">
    <property type="entry name" value="Epimerase"/>
    <property type="match status" value="1"/>
</dbReference>
<dbReference type="SUPFAM" id="SSF51735">
    <property type="entry name" value="NAD(P)-binding Rossmann-fold domains"/>
    <property type="match status" value="1"/>
</dbReference>
<feature type="chain" id="PRO_0000162406" description="Epimerase family protein ML0860">
    <location>
        <begin position="1"/>
        <end position="307"/>
    </location>
</feature>
<protein>
    <recommendedName>
        <fullName>Epimerase family protein ML0860</fullName>
    </recommendedName>
</protein>
<organism>
    <name type="scientific">Mycobacterium leprae (strain TN)</name>
    <dbReference type="NCBI Taxonomy" id="272631"/>
    <lineage>
        <taxon>Bacteria</taxon>
        <taxon>Bacillati</taxon>
        <taxon>Actinomycetota</taxon>
        <taxon>Actinomycetes</taxon>
        <taxon>Mycobacteriales</taxon>
        <taxon>Mycobacteriaceae</taxon>
        <taxon>Mycobacterium</taxon>
    </lineage>
</organism>
<accession>O32960</accession>
<sequence>MAQASRKAVVAIAGSSGMIGSALAAALRANDHLVLRIVRRTPANAEELHWNPESGEFDTDAITDVDAVVNLCGVNLGQRRWSGSFKQNLRDSRITPTEVLSAAVAEAGVKTFINASAVGYYGNTRDRVVDENDRAGTGFLAQLCQDWEGATLPAQYAGTRVILARTGMVLAQEAGVLSRMRPLFSFALGARIGNGRQYMSWISLEDEVRALLFAISHQSLSGPLNLTGPAPVTNAEFTTAFGRAINRPTPLMLPSFAVRAALGEFADEGLLIGQRAIPAALERAGFQFHHNTIGEALSYATTRPSQN</sequence>
<name>Y860_MYCLE</name>
<keyword id="KW-1185">Reference proteome</keyword>
<reference key="1">
    <citation type="journal article" date="2001" name="Nature">
        <title>Massive gene decay in the leprosy bacillus.</title>
        <authorList>
            <person name="Cole S.T."/>
            <person name="Eiglmeier K."/>
            <person name="Parkhill J."/>
            <person name="James K.D."/>
            <person name="Thomson N.R."/>
            <person name="Wheeler P.R."/>
            <person name="Honore N."/>
            <person name="Garnier T."/>
            <person name="Churcher C.M."/>
            <person name="Harris D.E."/>
            <person name="Mungall K.L."/>
            <person name="Basham D."/>
            <person name="Brown D."/>
            <person name="Chillingworth T."/>
            <person name="Connor R."/>
            <person name="Davies R.M."/>
            <person name="Devlin K."/>
            <person name="Duthoy S."/>
            <person name="Feltwell T."/>
            <person name="Fraser A."/>
            <person name="Hamlin N."/>
            <person name="Holroyd S."/>
            <person name="Hornsby T."/>
            <person name="Jagels K."/>
            <person name="Lacroix C."/>
            <person name="Maclean J."/>
            <person name="Moule S."/>
            <person name="Murphy L.D."/>
            <person name="Oliver K."/>
            <person name="Quail M.A."/>
            <person name="Rajandream M.A."/>
            <person name="Rutherford K.M."/>
            <person name="Rutter S."/>
            <person name="Seeger K."/>
            <person name="Simon S."/>
            <person name="Simmonds M."/>
            <person name="Skelton J."/>
            <person name="Squares R."/>
            <person name="Squares S."/>
            <person name="Stevens K."/>
            <person name="Taylor K."/>
            <person name="Whitehead S."/>
            <person name="Woodward J.R."/>
            <person name="Barrell B.G."/>
        </authorList>
    </citation>
    <scope>NUCLEOTIDE SEQUENCE [LARGE SCALE GENOMIC DNA]</scope>
    <source>
        <strain>TN</strain>
    </source>
</reference>